<reference key="1">
    <citation type="journal article" date="1998" name="Nature">
        <title>Deciphering the biology of Mycobacterium tuberculosis from the complete genome sequence.</title>
        <authorList>
            <person name="Cole S.T."/>
            <person name="Brosch R."/>
            <person name="Parkhill J."/>
            <person name="Garnier T."/>
            <person name="Churcher C.M."/>
            <person name="Harris D.E."/>
            <person name="Gordon S.V."/>
            <person name="Eiglmeier K."/>
            <person name="Gas S."/>
            <person name="Barry C.E. III"/>
            <person name="Tekaia F."/>
            <person name="Badcock K."/>
            <person name="Basham D."/>
            <person name="Brown D."/>
            <person name="Chillingworth T."/>
            <person name="Connor R."/>
            <person name="Davies R.M."/>
            <person name="Devlin K."/>
            <person name="Feltwell T."/>
            <person name="Gentles S."/>
            <person name="Hamlin N."/>
            <person name="Holroyd S."/>
            <person name="Hornsby T."/>
            <person name="Jagels K."/>
            <person name="Krogh A."/>
            <person name="McLean J."/>
            <person name="Moule S."/>
            <person name="Murphy L.D."/>
            <person name="Oliver S."/>
            <person name="Osborne J."/>
            <person name="Quail M.A."/>
            <person name="Rajandream M.A."/>
            <person name="Rogers J."/>
            <person name="Rutter S."/>
            <person name="Seeger K."/>
            <person name="Skelton S."/>
            <person name="Squares S."/>
            <person name="Squares R."/>
            <person name="Sulston J.E."/>
            <person name="Taylor K."/>
            <person name="Whitehead S."/>
            <person name="Barrell B.G."/>
        </authorList>
    </citation>
    <scope>NUCLEOTIDE SEQUENCE [LARGE SCALE GENOMIC DNA]</scope>
    <source>
        <strain>ATCC 25618 / H37Rv</strain>
    </source>
</reference>
<reference key="2">
    <citation type="journal article" date="2011" name="Mol. Cell. Proteomics">
        <title>Proteogenomic analysis of Mycobacterium tuberculosis by high resolution mass spectrometry.</title>
        <authorList>
            <person name="Kelkar D.S."/>
            <person name="Kumar D."/>
            <person name="Kumar P."/>
            <person name="Balakrishnan L."/>
            <person name="Muthusamy B."/>
            <person name="Yadav A.K."/>
            <person name="Shrivastava P."/>
            <person name="Marimuthu A."/>
            <person name="Anand S."/>
            <person name="Sundaram H."/>
            <person name="Kingsbury R."/>
            <person name="Harsha H.C."/>
            <person name="Nair B."/>
            <person name="Prasad T.S."/>
            <person name="Chauhan D.S."/>
            <person name="Katoch K."/>
            <person name="Katoch V.M."/>
            <person name="Kumar P."/>
            <person name="Chaerkady R."/>
            <person name="Ramachandran S."/>
            <person name="Dash D."/>
            <person name="Pandey A."/>
        </authorList>
    </citation>
    <scope>IDENTIFICATION BY MASS SPECTROMETRY [LARGE SCALE ANALYSIS]</scope>
    <source>
        <strain>ATCC 25618 / H37Rv</strain>
    </source>
</reference>
<reference key="3">
    <citation type="journal article" date="2022" name="Protein J.">
        <title>Investigating a putative transcriptional regulatory protein encoded by Rv1719 gene of Mycobacterium tuberculosis.</title>
        <authorList>
            <person name="Pandey M."/>
            <person name="Tiwari S."/>
            <person name="Johri S."/>
            <person name="Biswal B.K."/>
            <person name="Sharma C."/>
            <person name="Pandey A.K."/>
        </authorList>
    </citation>
    <scope>FUNCTION</scope>
    <scope>DNA-BINDING</scope>
    <scope>SUBUNIT</scope>
</reference>
<feature type="chain" id="PRO_0000458114" description="HTH-type transcriptional regulator Rv1719">
    <location>
        <begin position="1"/>
        <end position="259"/>
    </location>
</feature>
<feature type="domain" description="HTH iclR-type" evidence="1">
    <location>
        <begin position="13"/>
        <end position="75"/>
    </location>
</feature>
<feature type="domain" description="IclR-ED" evidence="2">
    <location>
        <begin position="88"/>
        <end position="259"/>
    </location>
</feature>
<feature type="DNA-binding region" description="H-T-H motif" evidence="1">
    <location>
        <begin position="35"/>
        <end position="54"/>
    </location>
</feature>
<proteinExistence type="evidence at protein level"/>
<dbReference type="EMBL" id="AL123456">
    <property type="protein sequence ID" value="CCP44485.1"/>
    <property type="molecule type" value="Genomic_DNA"/>
</dbReference>
<dbReference type="RefSeq" id="NP_216235.1">
    <property type="nucleotide sequence ID" value="NC_000962.3"/>
</dbReference>
<dbReference type="RefSeq" id="WP_003408460.1">
    <property type="nucleotide sequence ID" value="NZ_NVQJ01000010.1"/>
</dbReference>
<dbReference type="SMR" id="P71977"/>
<dbReference type="FunCoup" id="P71977">
    <property type="interactions" value="1"/>
</dbReference>
<dbReference type="STRING" id="83332.Rv1719"/>
<dbReference type="PaxDb" id="83332-Rv1719"/>
<dbReference type="DNASU" id="885170"/>
<dbReference type="GeneID" id="885170"/>
<dbReference type="KEGG" id="mtu:Rv1719"/>
<dbReference type="KEGG" id="mtv:RVBD_1719"/>
<dbReference type="PATRIC" id="fig|83332.111.peg.1909"/>
<dbReference type="TubercuList" id="Rv1719"/>
<dbReference type="eggNOG" id="COG1414">
    <property type="taxonomic scope" value="Bacteria"/>
</dbReference>
<dbReference type="InParanoid" id="P71977"/>
<dbReference type="OrthoDB" id="7274111at2"/>
<dbReference type="PhylomeDB" id="P71977"/>
<dbReference type="Proteomes" id="UP000001584">
    <property type="component" value="Chromosome"/>
</dbReference>
<dbReference type="GO" id="GO:0003677">
    <property type="term" value="F:DNA binding"/>
    <property type="evidence" value="ECO:0000318"/>
    <property type="project" value="GO_Central"/>
</dbReference>
<dbReference type="GO" id="GO:0003700">
    <property type="term" value="F:DNA-binding transcription factor activity"/>
    <property type="evidence" value="ECO:0000318"/>
    <property type="project" value="GO_Central"/>
</dbReference>
<dbReference type="GO" id="GO:0045892">
    <property type="term" value="P:negative regulation of DNA-templated transcription"/>
    <property type="evidence" value="ECO:0000318"/>
    <property type="project" value="GO_Central"/>
</dbReference>
<dbReference type="CDD" id="cd00092">
    <property type="entry name" value="HTH_CRP"/>
    <property type="match status" value="1"/>
</dbReference>
<dbReference type="FunFam" id="1.10.10.10:FF:000599">
    <property type="entry name" value="Crp family transcriptional regulator"/>
    <property type="match status" value="1"/>
</dbReference>
<dbReference type="Gene3D" id="3.30.450.40">
    <property type="match status" value="1"/>
</dbReference>
<dbReference type="Gene3D" id="1.10.10.10">
    <property type="entry name" value="Winged helix-like DNA-binding domain superfamily/Winged helix DNA-binding domain"/>
    <property type="match status" value="1"/>
</dbReference>
<dbReference type="InterPro" id="IPR001387">
    <property type="entry name" value="Cro/C1-type_HTH"/>
</dbReference>
<dbReference type="InterPro" id="IPR029016">
    <property type="entry name" value="GAF-like_dom_sf"/>
</dbReference>
<dbReference type="InterPro" id="IPR012318">
    <property type="entry name" value="HTH_CRP"/>
</dbReference>
<dbReference type="InterPro" id="IPR050707">
    <property type="entry name" value="HTH_MetabolicPath_Reg"/>
</dbReference>
<dbReference type="InterPro" id="IPR014757">
    <property type="entry name" value="Tscrpt_reg_IclR_C"/>
</dbReference>
<dbReference type="InterPro" id="IPR005471">
    <property type="entry name" value="Tscrpt_reg_IclR_N"/>
</dbReference>
<dbReference type="InterPro" id="IPR036388">
    <property type="entry name" value="WH-like_DNA-bd_sf"/>
</dbReference>
<dbReference type="InterPro" id="IPR036390">
    <property type="entry name" value="WH_DNA-bd_sf"/>
</dbReference>
<dbReference type="PANTHER" id="PTHR30136">
    <property type="entry name" value="HELIX-TURN-HELIX TRANSCRIPTIONAL REGULATOR, ICLR FAMILY"/>
    <property type="match status" value="1"/>
</dbReference>
<dbReference type="PANTHER" id="PTHR30136:SF35">
    <property type="entry name" value="HTH-TYPE TRANSCRIPTIONAL REGULATOR RV1719"/>
    <property type="match status" value="1"/>
</dbReference>
<dbReference type="Pfam" id="PF09339">
    <property type="entry name" value="HTH_IclR"/>
    <property type="match status" value="1"/>
</dbReference>
<dbReference type="Pfam" id="PF01614">
    <property type="entry name" value="IclR_C"/>
    <property type="match status" value="1"/>
</dbReference>
<dbReference type="PRINTS" id="PR00034">
    <property type="entry name" value="HTHCRP"/>
</dbReference>
<dbReference type="SMART" id="SM00419">
    <property type="entry name" value="HTH_CRP"/>
    <property type="match status" value="1"/>
</dbReference>
<dbReference type="SMART" id="SM00346">
    <property type="entry name" value="HTH_ICLR"/>
    <property type="match status" value="1"/>
</dbReference>
<dbReference type="SUPFAM" id="SSF55781">
    <property type="entry name" value="GAF domain-like"/>
    <property type="match status" value="1"/>
</dbReference>
<dbReference type="SUPFAM" id="SSF46785">
    <property type="entry name" value="Winged helix' DNA-binding domain"/>
    <property type="match status" value="1"/>
</dbReference>
<dbReference type="PROSITE" id="PS51077">
    <property type="entry name" value="HTH_ICLR"/>
    <property type="match status" value="1"/>
</dbReference>
<dbReference type="PROSITE" id="PS51078">
    <property type="entry name" value="ICLR_ED"/>
    <property type="match status" value="1"/>
</dbReference>
<evidence type="ECO:0000255" key="1">
    <source>
        <dbReference type="PROSITE-ProRule" id="PRU00393"/>
    </source>
</evidence>
<evidence type="ECO:0000255" key="2">
    <source>
        <dbReference type="PROSITE-ProRule" id="PRU00394"/>
    </source>
</evidence>
<evidence type="ECO:0000269" key="3">
    <source>
    </source>
</evidence>
<evidence type="ECO:0000305" key="4"/>
<evidence type="ECO:0000312" key="5">
    <source>
        <dbReference type="EMBL" id="CCP44485.1"/>
    </source>
</evidence>
<protein>
    <recommendedName>
        <fullName evidence="4">HTH-type transcriptional regulator Rv1719</fullName>
    </recommendedName>
</protein>
<comment type="function">
    <text evidence="3">Binds to the upstream region of Rv1714 and probably modulates the expression of the downstream gene(s).</text>
</comment>
<comment type="subunit">
    <text evidence="3">Homodimer.</text>
</comment>
<organism>
    <name type="scientific">Mycobacterium tuberculosis (strain ATCC 25618 / H37Rv)</name>
    <dbReference type="NCBI Taxonomy" id="83332"/>
    <lineage>
        <taxon>Bacteria</taxon>
        <taxon>Bacillati</taxon>
        <taxon>Actinomycetota</taxon>
        <taxon>Actinomycetes</taxon>
        <taxon>Mycobacteriales</taxon>
        <taxon>Mycobacteriaceae</taxon>
        <taxon>Mycobacterium</taxon>
        <taxon>Mycobacterium tuberculosis complex</taxon>
    </lineage>
</organism>
<name>Y1719_MYCTU</name>
<gene>
    <name evidence="5" type="ordered locus">Rv1719</name>
</gene>
<keyword id="KW-0238">DNA-binding</keyword>
<keyword id="KW-1185">Reference proteome</keyword>
<keyword id="KW-0804">Transcription</keyword>
<keyword id="KW-0805">Transcription regulation</keyword>
<accession>P71977</accession>
<accession>F2GK18</accession>
<accession>I6XYU8</accession>
<accession>Q7D833</accession>
<sequence length="259" mass="27905">MSAEEQDTRSGGIQVIARAAELLRVLQAHPGGLSQAEIGERVGMARSTVSRILNALEDEGLVASRGARGPYRLGPEITRMATTVRLGVVTEMHPFLTELSRELDETVDLSILDGDRADVVDQVVPPQRLRAVSAVGESFPLYCCANGKALLAALPPERQARALPSRLAPLTANTITDRAALRDELNRIRVDGVAYDREEQTEGICAVGAVLRGVSVELVAVSVPVPAQRFYGREAELAGALLAWVSKVDAWFNGTEDRK</sequence>